<proteinExistence type="inferred from homology"/>
<organism>
    <name type="scientific">Yersinia pseudotuberculosis serotype O:3 (strain YPIII)</name>
    <dbReference type="NCBI Taxonomy" id="502800"/>
    <lineage>
        <taxon>Bacteria</taxon>
        <taxon>Pseudomonadati</taxon>
        <taxon>Pseudomonadota</taxon>
        <taxon>Gammaproteobacteria</taxon>
        <taxon>Enterobacterales</taxon>
        <taxon>Yersiniaceae</taxon>
        <taxon>Yersinia</taxon>
    </lineage>
</organism>
<gene>
    <name evidence="1" type="primary">rplO</name>
    <name type="ordered locus">YPK_0302</name>
</gene>
<name>RL15_YERPY</name>
<comment type="function">
    <text evidence="1">Binds to the 23S rRNA.</text>
</comment>
<comment type="subunit">
    <text evidence="1">Part of the 50S ribosomal subunit.</text>
</comment>
<comment type="similarity">
    <text evidence="1">Belongs to the universal ribosomal protein uL15 family.</text>
</comment>
<protein>
    <recommendedName>
        <fullName evidence="1">Large ribosomal subunit protein uL15</fullName>
    </recommendedName>
    <alternativeName>
        <fullName evidence="3">50S ribosomal protein L15</fullName>
    </alternativeName>
</protein>
<dbReference type="EMBL" id="CP000950">
    <property type="protein sequence ID" value="ACA66615.1"/>
    <property type="molecule type" value="Genomic_DNA"/>
</dbReference>
<dbReference type="RefSeq" id="WP_002213341.1">
    <property type="nucleotide sequence ID" value="NZ_CP009792.1"/>
</dbReference>
<dbReference type="SMR" id="B1JIY0"/>
<dbReference type="GeneID" id="96663177"/>
<dbReference type="KEGG" id="ypy:YPK_0302"/>
<dbReference type="PATRIC" id="fig|502800.11.peg.909"/>
<dbReference type="GO" id="GO:0022625">
    <property type="term" value="C:cytosolic large ribosomal subunit"/>
    <property type="evidence" value="ECO:0007669"/>
    <property type="project" value="TreeGrafter"/>
</dbReference>
<dbReference type="GO" id="GO:0019843">
    <property type="term" value="F:rRNA binding"/>
    <property type="evidence" value="ECO:0007669"/>
    <property type="project" value="UniProtKB-UniRule"/>
</dbReference>
<dbReference type="GO" id="GO:0003735">
    <property type="term" value="F:structural constituent of ribosome"/>
    <property type="evidence" value="ECO:0007669"/>
    <property type="project" value="InterPro"/>
</dbReference>
<dbReference type="GO" id="GO:0006412">
    <property type="term" value="P:translation"/>
    <property type="evidence" value="ECO:0007669"/>
    <property type="project" value="UniProtKB-UniRule"/>
</dbReference>
<dbReference type="FunFam" id="3.100.10.10:FF:000003">
    <property type="entry name" value="50S ribosomal protein L15"/>
    <property type="match status" value="1"/>
</dbReference>
<dbReference type="Gene3D" id="3.100.10.10">
    <property type="match status" value="1"/>
</dbReference>
<dbReference type="HAMAP" id="MF_01341">
    <property type="entry name" value="Ribosomal_uL15"/>
    <property type="match status" value="1"/>
</dbReference>
<dbReference type="InterPro" id="IPR030878">
    <property type="entry name" value="Ribosomal_uL15"/>
</dbReference>
<dbReference type="InterPro" id="IPR021131">
    <property type="entry name" value="Ribosomal_uL15/eL18"/>
</dbReference>
<dbReference type="InterPro" id="IPR036227">
    <property type="entry name" value="Ribosomal_uL15/eL18_sf"/>
</dbReference>
<dbReference type="InterPro" id="IPR005749">
    <property type="entry name" value="Ribosomal_uL15_bac-type"/>
</dbReference>
<dbReference type="InterPro" id="IPR001196">
    <property type="entry name" value="Ribosomal_uL15_CS"/>
</dbReference>
<dbReference type="NCBIfam" id="TIGR01071">
    <property type="entry name" value="rplO_bact"/>
    <property type="match status" value="1"/>
</dbReference>
<dbReference type="PANTHER" id="PTHR12934">
    <property type="entry name" value="50S RIBOSOMAL PROTEIN L15"/>
    <property type="match status" value="1"/>
</dbReference>
<dbReference type="PANTHER" id="PTHR12934:SF11">
    <property type="entry name" value="LARGE RIBOSOMAL SUBUNIT PROTEIN UL15M"/>
    <property type="match status" value="1"/>
</dbReference>
<dbReference type="Pfam" id="PF00828">
    <property type="entry name" value="Ribosomal_L27A"/>
    <property type="match status" value="1"/>
</dbReference>
<dbReference type="SUPFAM" id="SSF52080">
    <property type="entry name" value="Ribosomal proteins L15p and L18e"/>
    <property type="match status" value="1"/>
</dbReference>
<dbReference type="PROSITE" id="PS00475">
    <property type="entry name" value="RIBOSOMAL_L15"/>
    <property type="match status" value="1"/>
</dbReference>
<evidence type="ECO:0000255" key="1">
    <source>
        <dbReference type="HAMAP-Rule" id="MF_01341"/>
    </source>
</evidence>
<evidence type="ECO:0000256" key="2">
    <source>
        <dbReference type="SAM" id="MobiDB-lite"/>
    </source>
</evidence>
<evidence type="ECO:0000305" key="3"/>
<accession>B1JIY0</accession>
<reference key="1">
    <citation type="submission" date="2008-02" db="EMBL/GenBank/DDBJ databases">
        <title>Complete sequence of Yersinia pseudotuberculosis YPIII.</title>
        <authorList>
            <consortium name="US DOE Joint Genome Institute"/>
            <person name="Copeland A."/>
            <person name="Lucas S."/>
            <person name="Lapidus A."/>
            <person name="Glavina del Rio T."/>
            <person name="Dalin E."/>
            <person name="Tice H."/>
            <person name="Bruce D."/>
            <person name="Goodwin L."/>
            <person name="Pitluck S."/>
            <person name="Munk A.C."/>
            <person name="Brettin T."/>
            <person name="Detter J.C."/>
            <person name="Han C."/>
            <person name="Tapia R."/>
            <person name="Schmutz J."/>
            <person name="Larimer F."/>
            <person name="Land M."/>
            <person name="Hauser L."/>
            <person name="Challacombe J.F."/>
            <person name="Green L."/>
            <person name="Lindler L.E."/>
            <person name="Nikolich M.P."/>
            <person name="Richardson P."/>
        </authorList>
    </citation>
    <scope>NUCLEOTIDE SEQUENCE [LARGE SCALE GENOMIC DNA]</scope>
    <source>
        <strain>YPIII</strain>
    </source>
</reference>
<feature type="chain" id="PRO_1000142905" description="Large ribosomal subunit protein uL15">
    <location>
        <begin position="1"/>
        <end position="144"/>
    </location>
</feature>
<feature type="region of interest" description="Disordered" evidence="2">
    <location>
        <begin position="1"/>
        <end position="52"/>
    </location>
</feature>
<feature type="compositionally biased region" description="Gly residues" evidence="2">
    <location>
        <begin position="21"/>
        <end position="31"/>
    </location>
</feature>
<keyword id="KW-0687">Ribonucleoprotein</keyword>
<keyword id="KW-0689">Ribosomal protein</keyword>
<keyword id="KW-0694">RNA-binding</keyword>
<keyword id="KW-0699">rRNA-binding</keyword>
<sequence length="144" mass="15207">MRLNTLSPAEGAKHAPKRVGRGIGSGLGKTAGRGHKGQNSRSGGGVRRGFEGGQMPLYRRLPKFGFTSRKAMITAEVRLSELALVEGDVIDLNTLKAANVVGIQMEFVKVILSGEVNRAVTLRGLRVTKGARAAIEAAGGKIEE</sequence>